<evidence type="ECO:0000255" key="1">
    <source>
        <dbReference type="HAMAP-Rule" id="MF_00805"/>
    </source>
</evidence>
<keyword id="KW-0963">Cytoplasm</keyword>
<keyword id="KW-0597">Phosphoprotein</keyword>
<proteinExistence type="inferred from homology"/>
<dbReference type="EMBL" id="FM204884">
    <property type="protein sequence ID" value="CAW99276.1"/>
    <property type="molecule type" value="Genomic_DNA"/>
</dbReference>
<dbReference type="SMR" id="C0MFE9"/>
<dbReference type="KEGG" id="seq:SZO_09760"/>
<dbReference type="eggNOG" id="COG3052">
    <property type="taxonomic scope" value="Bacteria"/>
</dbReference>
<dbReference type="HOGENOM" id="CLU_158489_0_0_9"/>
<dbReference type="Proteomes" id="UP000001368">
    <property type="component" value="Chromosome"/>
</dbReference>
<dbReference type="GO" id="GO:0005737">
    <property type="term" value="C:cytoplasm"/>
    <property type="evidence" value="ECO:0007669"/>
    <property type="project" value="UniProtKB-SubCell"/>
</dbReference>
<dbReference type="HAMAP" id="MF_00805">
    <property type="entry name" value="CitD"/>
    <property type="match status" value="1"/>
</dbReference>
<dbReference type="InterPro" id="IPR006495">
    <property type="entry name" value="CitD"/>
</dbReference>
<dbReference type="InterPro" id="IPR023439">
    <property type="entry name" value="Mal_deCO2ase/Cit_lyase_ACP"/>
</dbReference>
<dbReference type="NCBIfam" id="TIGR01608">
    <property type="entry name" value="citD"/>
    <property type="match status" value="1"/>
</dbReference>
<dbReference type="NCBIfam" id="NF009726">
    <property type="entry name" value="PRK13253.1"/>
    <property type="match status" value="1"/>
</dbReference>
<dbReference type="Pfam" id="PF06857">
    <property type="entry name" value="ACP"/>
    <property type="match status" value="1"/>
</dbReference>
<dbReference type="PIRSF" id="PIRSF002736">
    <property type="entry name" value="Citrt_lyas_gamma"/>
    <property type="match status" value="1"/>
</dbReference>
<comment type="function">
    <text evidence="1">Covalent carrier of the coenzyme of citrate lyase.</text>
</comment>
<comment type="subunit">
    <text evidence="1">Oligomer with a subunit composition of (alpha,beta,gamma)6.</text>
</comment>
<comment type="subcellular location">
    <subcellularLocation>
        <location evidence="1">Cytoplasm</location>
    </subcellularLocation>
</comment>
<comment type="similarity">
    <text evidence="1">Belongs to the CitD family.</text>
</comment>
<organism>
    <name type="scientific">Streptococcus equi subsp. zooepidemicus (strain H70)</name>
    <dbReference type="NCBI Taxonomy" id="553483"/>
    <lineage>
        <taxon>Bacteria</taxon>
        <taxon>Bacillati</taxon>
        <taxon>Bacillota</taxon>
        <taxon>Bacilli</taxon>
        <taxon>Lactobacillales</taxon>
        <taxon>Streptococcaceae</taxon>
        <taxon>Streptococcus</taxon>
    </lineage>
</organism>
<sequence>MEIKQIAVAGSLESSDMMITISPNDGQGIVLELDSSVEKQFGNHIRALIKTTLANLGVESATIEAVDKGALDCTIQARTIAAVHRAAGVEHYNWKEIDSWNA</sequence>
<name>CITD_STRS7</name>
<accession>C0MFE9</accession>
<reference key="1">
    <citation type="journal article" date="2009" name="PLoS Pathog.">
        <title>Genomic evidence for the evolution of Streptococcus equi: host restriction, increased virulence, and genetic exchange with human pathogens.</title>
        <authorList>
            <person name="Holden M.T.G."/>
            <person name="Heather Z."/>
            <person name="Paillot R."/>
            <person name="Steward K.F."/>
            <person name="Webb K."/>
            <person name="Ainslie F."/>
            <person name="Jourdan T."/>
            <person name="Bason N.C."/>
            <person name="Holroyd N.E."/>
            <person name="Mungall K."/>
            <person name="Quail M.A."/>
            <person name="Sanders M."/>
            <person name="Simmonds M."/>
            <person name="Willey D."/>
            <person name="Brooks K."/>
            <person name="Aanensen D.M."/>
            <person name="Spratt B.G."/>
            <person name="Jolley K.A."/>
            <person name="Maiden M.C.J."/>
            <person name="Kehoe M."/>
            <person name="Chanter N."/>
            <person name="Bentley S.D."/>
            <person name="Robinson C."/>
            <person name="Maskell D.J."/>
            <person name="Parkhill J."/>
            <person name="Waller A.S."/>
        </authorList>
    </citation>
    <scope>NUCLEOTIDE SEQUENCE [LARGE SCALE GENOMIC DNA]</scope>
    <source>
        <strain>H70</strain>
    </source>
</reference>
<feature type="chain" id="PRO_1000213004" description="Citrate lyase acyl carrier protein">
    <location>
        <begin position="1"/>
        <end position="102"/>
    </location>
</feature>
<feature type="modified residue" description="O-(phosphoribosyl dephospho-coenzyme A)serine" evidence="1">
    <location>
        <position position="14"/>
    </location>
</feature>
<gene>
    <name evidence="1" type="primary">citD</name>
    <name type="ordered locus">SZO_09760</name>
</gene>
<protein>
    <recommendedName>
        <fullName evidence="1">Citrate lyase acyl carrier protein</fullName>
    </recommendedName>
    <alternativeName>
        <fullName evidence="1">Citrate lyase gamma chain</fullName>
    </alternativeName>
</protein>